<organism>
    <name type="scientific">Acidiphilium cryptum (strain JF-5)</name>
    <dbReference type="NCBI Taxonomy" id="349163"/>
    <lineage>
        <taxon>Bacteria</taxon>
        <taxon>Pseudomonadati</taxon>
        <taxon>Pseudomonadota</taxon>
        <taxon>Alphaproteobacteria</taxon>
        <taxon>Acetobacterales</taxon>
        <taxon>Acidocellaceae</taxon>
        <taxon>Acidiphilium</taxon>
    </lineage>
</organism>
<sequence>MSAVHENEARRRQRLRYQIRLKAHGRPRLSVFRSGKHIYAQVIDDAAGRTLAAASSLDAGLRSALKTGADKAAAAAVGKLVAERAKEAGVTQVVFDRGAYMYHGRVKALAEAARESGLDF</sequence>
<name>RL18_ACICJ</name>
<evidence type="ECO:0000255" key="1">
    <source>
        <dbReference type="HAMAP-Rule" id="MF_01337"/>
    </source>
</evidence>
<evidence type="ECO:0000305" key="2"/>
<dbReference type="EMBL" id="CP000697">
    <property type="protein sequence ID" value="ABQ31131.1"/>
    <property type="molecule type" value="Genomic_DNA"/>
</dbReference>
<dbReference type="RefSeq" id="WP_007424189.1">
    <property type="nucleotide sequence ID" value="NC_009484.1"/>
</dbReference>
<dbReference type="SMR" id="A5FZU9"/>
<dbReference type="STRING" id="349163.Acry_1930"/>
<dbReference type="KEGG" id="acr:Acry_1930"/>
<dbReference type="eggNOG" id="COG0256">
    <property type="taxonomic scope" value="Bacteria"/>
</dbReference>
<dbReference type="HOGENOM" id="CLU_098841_0_1_5"/>
<dbReference type="Proteomes" id="UP000000245">
    <property type="component" value="Chromosome"/>
</dbReference>
<dbReference type="GO" id="GO:0022625">
    <property type="term" value="C:cytosolic large ribosomal subunit"/>
    <property type="evidence" value="ECO:0007669"/>
    <property type="project" value="TreeGrafter"/>
</dbReference>
<dbReference type="GO" id="GO:0008097">
    <property type="term" value="F:5S rRNA binding"/>
    <property type="evidence" value="ECO:0007669"/>
    <property type="project" value="TreeGrafter"/>
</dbReference>
<dbReference type="GO" id="GO:0003735">
    <property type="term" value="F:structural constituent of ribosome"/>
    <property type="evidence" value="ECO:0007669"/>
    <property type="project" value="InterPro"/>
</dbReference>
<dbReference type="GO" id="GO:0006412">
    <property type="term" value="P:translation"/>
    <property type="evidence" value="ECO:0007669"/>
    <property type="project" value="UniProtKB-UniRule"/>
</dbReference>
<dbReference type="CDD" id="cd00432">
    <property type="entry name" value="Ribosomal_L18_L5e"/>
    <property type="match status" value="1"/>
</dbReference>
<dbReference type="FunFam" id="3.30.420.100:FF:000001">
    <property type="entry name" value="50S ribosomal protein L18"/>
    <property type="match status" value="1"/>
</dbReference>
<dbReference type="Gene3D" id="3.30.420.100">
    <property type="match status" value="1"/>
</dbReference>
<dbReference type="HAMAP" id="MF_01337_B">
    <property type="entry name" value="Ribosomal_uL18_B"/>
    <property type="match status" value="1"/>
</dbReference>
<dbReference type="InterPro" id="IPR004389">
    <property type="entry name" value="Ribosomal_uL18_bac-type"/>
</dbReference>
<dbReference type="InterPro" id="IPR005484">
    <property type="entry name" value="Ribosomal_uL18_bac/euk"/>
</dbReference>
<dbReference type="NCBIfam" id="TIGR00060">
    <property type="entry name" value="L18_bact"/>
    <property type="match status" value="1"/>
</dbReference>
<dbReference type="PANTHER" id="PTHR12899">
    <property type="entry name" value="39S RIBOSOMAL PROTEIN L18, MITOCHONDRIAL"/>
    <property type="match status" value="1"/>
</dbReference>
<dbReference type="PANTHER" id="PTHR12899:SF3">
    <property type="entry name" value="LARGE RIBOSOMAL SUBUNIT PROTEIN UL18M"/>
    <property type="match status" value="1"/>
</dbReference>
<dbReference type="Pfam" id="PF00861">
    <property type="entry name" value="Ribosomal_L18p"/>
    <property type="match status" value="1"/>
</dbReference>
<dbReference type="SUPFAM" id="SSF53137">
    <property type="entry name" value="Translational machinery components"/>
    <property type="match status" value="1"/>
</dbReference>
<feature type="chain" id="PRO_1000052978" description="Large ribosomal subunit protein uL18">
    <location>
        <begin position="1"/>
        <end position="120"/>
    </location>
</feature>
<keyword id="KW-1185">Reference proteome</keyword>
<keyword id="KW-0687">Ribonucleoprotein</keyword>
<keyword id="KW-0689">Ribosomal protein</keyword>
<keyword id="KW-0694">RNA-binding</keyword>
<keyword id="KW-0699">rRNA-binding</keyword>
<proteinExistence type="inferred from homology"/>
<protein>
    <recommendedName>
        <fullName evidence="1">Large ribosomal subunit protein uL18</fullName>
    </recommendedName>
    <alternativeName>
        <fullName evidence="2">50S ribosomal protein L18</fullName>
    </alternativeName>
</protein>
<reference key="1">
    <citation type="submission" date="2007-05" db="EMBL/GenBank/DDBJ databases">
        <title>Complete sequence of chromosome of Acidiphilium cryptum JF-5.</title>
        <authorList>
            <consortium name="US DOE Joint Genome Institute"/>
            <person name="Copeland A."/>
            <person name="Lucas S."/>
            <person name="Lapidus A."/>
            <person name="Barry K."/>
            <person name="Detter J.C."/>
            <person name="Glavina del Rio T."/>
            <person name="Hammon N."/>
            <person name="Israni S."/>
            <person name="Dalin E."/>
            <person name="Tice H."/>
            <person name="Pitluck S."/>
            <person name="Sims D."/>
            <person name="Brettin T."/>
            <person name="Bruce D."/>
            <person name="Han C."/>
            <person name="Schmutz J."/>
            <person name="Larimer F."/>
            <person name="Land M."/>
            <person name="Hauser L."/>
            <person name="Kyrpides N."/>
            <person name="Kim E."/>
            <person name="Magnuson T."/>
            <person name="Richardson P."/>
        </authorList>
    </citation>
    <scope>NUCLEOTIDE SEQUENCE [LARGE SCALE GENOMIC DNA]</scope>
    <source>
        <strain>JF-5</strain>
    </source>
</reference>
<comment type="function">
    <text evidence="1">This is one of the proteins that bind and probably mediate the attachment of the 5S RNA into the large ribosomal subunit, where it forms part of the central protuberance.</text>
</comment>
<comment type="subunit">
    <text evidence="1">Part of the 50S ribosomal subunit; part of the 5S rRNA/L5/L18/L25 subcomplex. Contacts the 5S and 23S rRNAs.</text>
</comment>
<comment type="similarity">
    <text evidence="1">Belongs to the universal ribosomal protein uL18 family.</text>
</comment>
<accession>A5FZU9</accession>
<gene>
    <name evidence="1" type="primary">rplR</name>
    <name type="ordered locus">Acry_1930</name>
</gene>